<gene>
    <name evidence="1" type="primary">fni</name>
    <name type="ordered locus">LPC_1537</name>
</gene>
<protein>
    <recommendedName>
        <fullName evidence="1">Isopentenyl-diphosphate delta-isomerase</fullName>
        <shortName evidence="1">IPP isomerase</shortName>
        <ecNumber evidence="1">5.3.3.2</ecNumber>
    </recommendedName>
    <alternativeName>
        <fullName evidence="1">Isopentenyl diphosphate:dimethylallyl diphosphate isomerase</fullName>
    </alternativeName>
    <alternativeName>
        <fullName evidence="1">Isopentenyl pyrophosphate isomerase</fullName>
    </alternativeName>
    <alternativeName>
        <fullName evidence="1">Type 2 isopentenyl diphosphate isomerase</fullName>
        <shortName evidence="1">IDI-2</shortName>
    </alternativeName>
</protein>
<organism>
    <name type="scientific">Legionella pneumophila (strain Corby)</name>
    <dbReference type="NCBI Taxonomy" id="400673"/>
    <lineage>
        <taxon>Bacteria</taxon>
        <taxon>Pseudomonadati</taxon>
        <taxon>Pseudomonadota</taxon>
        <taxon>Gammaproteobacteria</taxon>
        <taxon>Legionellales</taxon>
        <taxon>Legionellaceae</taxon>
        <taxon>Legionella</taxon>
    </lineage>
</organism>
<proteinExistence type="inferred from homology"/>
<reference key="1">
    <citation type="submission" date="2006-11" db="EMBL/GenBank/DDBJ databases">
        <title>Identification and characterization of a new conjugation/ type IVA secretion system (trb/tra) of L. pneumophila Corby localized on a mobile genomic island.</title>
        <authorList>
            <person name="Gloeckner G."/>
            <person name="Albert-Weissenberger C."/>
            <person name="Weinmann E."/>
            <person name="Jacobi S."/>
            <person name="Schunder E."/>
            <person name="Steinert M."/>
            <person name="Buchrieser C."/>
            <person name="Hacker J."/>
            <person name="Heuner K."/>
        </authorList>
    </citation>
    <scope>NUCLEOTIDE SEQUENCE [LARGE SCALE GENOMIC DNA]</scope>
    <source>
        <strain>Corby</strain>
    </source>
</reference>
<evidence type="ECO:0000255" key="1">
    <source>
        <dbReference type="HAMAP-Rule" id="MF_00354"/>
    </source>
</evidence>
<comment type="function">
    <text evidence="1">Involved in the biosynthesis of isoprenoids. Catalyzes the 1,3-allylic rearrangement of the homoallylic substrate isopentenyl (IPP) to its allylic isomer, dimethylallyl diphosphate (DMAPP).</text>
</comment>
<comment type="catalytic activity">
    <reaction evidence="1">
        <text>isopentenyl diphosphate = dimethylallyl diphosphate</text>
        <dbReference type="Rhea" id="RHEA:23284"/>
        <dbReference type="ChEBI" id="CHEBI:57623"/>
        <dbReference type="ChEBI" id="CHEBI:128769"/>
        <dbReference type="EC" id="5.3.3.2"/>
    </reaction>
</comment>
<comment type="cofactor">
    <cofactor evidence="1">
        <name>FMN</name>
        <dbReference type="ChEBI" id="CHEBI:58210"/>
    </cofactor>
</comment>
<comment type="cofactor">
    <cofactor evidence="1">
        <name>NADPH</name>
        <dbReference type="ChEBI" id="CHEBI:57783"/>
    </cofactor>
</comment>
<comment type="cofactor">
    <cofactor evidence="1">
        <name>Mg(2+)</name>
        <dbReference type="ChEBI" id="CHEBI:18420"/>
    </cofactor>
</comment>
<comment type="subunit">
    <text evidence="1">Homooctamer. Dimer of tetramers.</text>
</comment>
<comment type="subcellular location">
    <subcellularLocation>
        <location evidence="1">Cytoplasm</location>
    </subcellularLocation>
</comment>
<comment type="similarity">
    <text evidence="1">Belongs to the IPP isomerase type 2 family.</text>
</comment>
<name>IDI2_LEGPC</name>
<keyword id="KW-0963">Cytoplasm</keyword>
<keyword id="KW-0285">Flavoprotein</keyword>
<keyword id="KW-0288">FMN</keyword>
<keyword id="KW-0413">Isomerase</keyword>
<keyword id="KW-0414">Isoprene biosynthesis</keyword>
<keyword id="KW-0460">Magnesium</keyword>
<keyword id="KW-0479">Metal-binding</keyword>
<keyword id="KW-0521">NADP</keyword>
<feature type="chain" id="PRO_1000048442" description="Isopentenyl-diphosphate delta-isomerase">
    <location>
        <begin position="1"/>
        <end position="342"/>
    </location>
</feature>
<feature type="binding site" evidence="1">
    <location>
        <begin position="11"/>
        <end position="12"/>
    </location>
    <ligand>
        <name>substrate</name>
    </ligand>
</feature>
<feature type="binding site" evidence="1">
    <location>
        <position position="68"/>
    </location>
    <ligand>
        <name>FMN</name>
        <dbReference type="ChEBI" id="CHEBI:58210"/>
    </ligand>
</feature>
<feature type="binding site" evidence="1">
    <location>
        <begin position="69"/>
        <end position="71"/>
    </location>
    <ligand>
        <name>FMN</name>
        <dbReference type="ChEBI" id="CHEBI:58210"/>
    </ligand>
</feature>
<feature type="binding site" evidence="1">
    <location>
        <begin position="99"/>
        <end position="101"/>
    </location>
    <ligand>
        <name>substrate</name>
    </ligand>
</feature>
<feature type="binding site" evidence="1">
    <location>
        <position position="99"/>
    </location>
    <ligand>
        <name>FMN</name>
        <dbReference type="ChEBI" id="CHEBI:58210"/>
    </ligand>
</feature>
<feature type="binding site" evidence="1">
    <location>
        <position position="128"/>
    </location>
    <ligand>
        <name>FMN</name>
        <dbReference type="ChEBI" id="CHEBI:58210"/>
    </ligand>
</feature>
<feature type="binding site" evidence="1">
    <location>
        <position position="162"/>
    </location>
    <ligand>
        <name>substrate</name>
    </ligand>
</feature>
<feature type="binding site" evidence="1">
    <location>
        <position position="163"/>
    </location>
    <ligand>
        <name>Mg(2+)</name>
        <dbReference type="ChEBI" id="CHEBI:18420"/>
    </ligand>
</feature>
<feature type="binding site" evidence="1">
    <location>
        <position position="194"/>
    </location>
    <ligand>
        <name>FMN</name>
        <dbReference type="ChEBI" id="CHEBI:58210"/>
    </ligand>
</feature>
<feature type="binding site" evidence="1">
    <location>
        <position position="219"/>
    </location>
    <ligand>
        <name>FMN</name>
        <dbReference type="ChEBI" id="CHEBI:58210"/>
    </ligand>
</feature>
<feature type="binding site" evidence="1">
    <location>
        <position position="224"/>
    </location>
    <ligand>
        <name>FMN</name>
        <dbReference type="ChEBI" id="CHEBI:58210"/>
    </ligand>
</feature>
<feature type="binding site" evidence="1">
    <location>
        <begin position="275"/>
        <end position="277"/>
    </location>
    <ligand>
        <name>FMN</name>
        <dbReference type="ChEBI" id="CHEBI:58210"/>
    </ligand>
</feature>
<feature type="binding site" evidence="1">
    <location>
        <begin position="296"/>
        <end position="297"/>
    </location>
    <ligand>
        <name>FMN</name>
        <dbReference type="ChEBI" id="CHEBI:58210"/>
    </ligand>
</feature>
<dbReference type="EC" id="5.3.3.2" evidence="1"/>
<dbReference type="EMBL" id="CP000675">
    <property type="protein sequence ID" value="ABQ55486.1"/>
    <property type="molecule type" value="Genomic_DNA"/>
</dbReference>
<dbReference type="RefSeq" id="WP_011946947.1">
    <property type="nucleotide sequence ID" value="NZ_JAPMSS010000011.1"/>
</dbReference>
<dbReference type="SMR" id="A5IDN6"/>
<dbReference type="KEGG" id="lpc:LPC_1537"/>
<dbReference type="HOGENOM" id="CLU_065515_1_0_6"/>
<dbReference type="GO" id="GO:0005737">
    <property type="term" value="C:cytoplasm"/>
    <property type="evidence" value="ECO:0007669"/>
    <property type="project" value="UniProtKB-SubCell"/>
</dbReference>
<dbReference type="GO" id="GO:0010181">
    <property type="term" value="F:FMN binding"/>
    <property type="evidence" value="ECO:0007669"/>
    <property type="project" value="UniProtKB-UniRule"/>
</dbReference>
<dbReference type="GO" id="GO:0004452">
    <property type="term" value="F:isopentenyl-diphosphate delta-isomerase activity"/>
    <property type="evidence" value="ECO:0007669"/>
    <property type="project" value="UniProtKB-UniRule"/>
</dbReference>
<dbReference type="GO" id="GO:0000287">
    <property type="term" value="F:magnesium ion binding"/>
    <property type="evidence" value="ECO:0007669"/>
    <property type="project" value="UniProtKB-UniRule"/>
</dbReference>
<dbReference type="GO" id="GO:0070402">
    <property type="term" value="F:NADPH binding"/>
    <property type="evidence" value="ECO:0007669"/>
    <property type="project" value="UniProtKB-UniRule"/>
</dbReference>
<dbReference type="GO" id="GO:0016491">
    <property type="term" value="F:oxidoreductase activity"/>
    <property type="evidence" value="ECO:0007669"/>
    <property type="project" value="InterPro"/>
</dbReference>
<dbReference type="GO" id="GO:0008299">
    <property type="term" value="P:isoprenoid biosynthetic process"/>
    <property type="evidence" value="ECO:0007669"/>
    <property type="project" value="UniProtKB-UniRule"/>
</dbReference>
<dbReference type="CDD" id="cd02811">
    <property type="entry name" value="IDI-2_FMN"/>
    <property type="match status" value="1"/>
</dbReference>
<dbReference type="Gene3D" id="3.20.20.70">
    <property type="entry name" value="Aldolase class I"/>
    <property type="match status" value="1"/>
</dbReference>
<dbReference type="HAMAP" id="MF_00354">
    <property type="entry name" value="Idi_2"/>
    <property type="match status" value="1"/>
</dbReference>
<dbReference type="InterPro" id="IPR013785">
    <property type="entry name" value="Aldolase_TIM"/>
</dbReference>
<dbReference type="InterPro" id="IPR000262">
    <property type="entry name" value="FMN-dep_DH"/>
</dbReference>
<dbReference type="InterPro" id="IPR011179">
    <property type="entry name" value="IPdP_isomerase"/>
</dbReference>
<dbReference type="NCBIfam" id="TIGR02151">
    <property type="entry name" value="IPP_isom_2"/>
    <property type="match status" value="1"/>
</dbReference>
<dbReference type="PANTHER" id="PTHR43665">
    <property type="entry name" value="ISOPENTENYL-DIPHOSPHATE DELTA-ISOMERASE"/>
    <property type="match status" value="1"/>
</dbReference>
<dbReference type="PANTHER" id="PTHR43665:SF1">
    <property type="entry name" value="ISOPENTENYL-DIPHOSPHATE DELTA-ISOMERASE"/>
    <property type="match status" value="1"/>
</dbReference>
<dbReference type="Pfam" id="PF01070">
    <property type="entry name" value="FMN_dh"/>
    <property type="match status" value="1"/>
</dbReference>
<dbReference type="PIRSF" id="PIRSF003314">
    <property type="entry name" value="IPP_isomerase"/>
    <property type="match status" value="1"/>
</dbReference>
<dbReference type="SUPFAM" id="SSF51395">
    <property type="entry name" value="FMN-linked oxidoreductases"/>
    <property type="match status" value="1"/>
</dbReference>
<accession>A5IDN6</accession>
<sequence length="342" mass="37901">MQNEYSQFEQRKRDHIELALMPANQSSELNPFDHFSLVHEALPDLDFKDISIQSIRLKKKVEKPFIISSMTAGHSNALEINYRLMEACSKTKWAMGVGSQRRELTDKQAAFEWAPLRRDFPMVSLFSNLGIAQLIDTPISAIQRLIDTLQAEALIVHCNPLQECIQPEGTTNFQGCWTALEALVKKIASPVIIKETGCGFSKNTLLRLNNIGVAAVDVSGVGGTHWGRIEGHRANKDPIRHRTADTFRNWGIDTLQSIRNAISLNPSFEIWGSGGVRNGLDAAKLFALGATTVGFAKPMLEAALDSTGQVLTQMNTIEYELKTAMFCTGSRVLDDLKEKACP</sequence>